<reference key="1">
    <citation type="journal article" date="1990" name="J. Biochem.">
        <title>Basigin, a new, broadly distributed member of the immunoglobulin superfamily, has strong homology with both the immunoglobulin V domain and the beta-chain of major histocompatibility complex class II antigen.</title>
        <authorList>
            <person name="Miyauchi T."/>
            <person name="Kanekura T."/>
            <person name="Yamaoka A."/>
            <person name="Ozawa M."/>
            <person name="Miyazawa S."/>
            <person name="Muramatsu T."/>
        </authorList>
    </citation>
    <scope>NUCLEOTIDE SEQUENCE [MRNA] (ISOFORM 2)</scope>
    <scope>TISSUE SPECIFICITY (ISOFORM 2)</scope>
    <source>
        <strain>129/Sv</strain>
    </source>
</reference>
<reference key="2">
    <citation type="journal article" date="1989" name="Gene">
        <title>Cloning of cDNA for a novel mouse membrane glycoprotein (gp42): shared identity to histocompatibility antigens, immunoglobulins and neural-cell adhesion molecules.</title>
        <authorList>
            <person name="Altruda F."/>
            <person name="Cervella P."/>
            <person name="Gaeta M.L."/>
            <person name="Daniele A."/>
            <person name="Giancotti F."/>
            <person name="Tarone G."/>
            <person name="Stefanuto G."/>
            <person name="Silengo L."/>
        </authorList>
    </citation>
    <scope>NUCLEOTIDE SEQUENCE (ISOFORM 2)</scope>
    <source>
        <tissue>Fibroblast</tissue>
    </source>
</reference>
<reference key="3">
    <citation type="journal article" date="1993" name="Adv. Exp. Med. Biol.">
        <title>Expression of the HT7 gene in blood-brain barrier.</title>
        <authorList>
            <person name="Unger C.M."/>
            <person name="Seulberger H."/>
            <person name="Breier G."/>
            <person name="Albrecht U."/>
            <person name="Achen M.G."/>
            <person name="Risau W."/>
        </authorList>
    </citation>
    <scope>NUCLEOTIDE SEQUENCE [MRNA] (ISOFORM 2)</scope>
    <source>
        <tissue>Kidney</tissue>
    </source>
</reference>
<reference key="4">
    <citation type="journal article" date="1995" name="J. Biochem.">
        <title>Structure of the mouse basigin gene, a unique member of the immunoglobulin superfamily.</title>
        <authorList>
            <person name="Miyauchi T."/>
            <person name="Jimma F."/>
            <person name="Igakura T."/>
            <person name="Yu S."/>
            <person name="Ozawa M."/>
            <person name="Muramatsu T."/>
        </authorList>
    </citation>
    <scope>NUCLEOTIDE SEQUENCE [GENOMIC DNA] (ISOFORM 2)</scope>
    <source>
        <strain>BALB/cJ</strain>
        <tissue>Liver</tissue>
    </source>
</reference>
<reference key="5">
    <citation type="journal article" date="1991" name="Cell Struct. Funct.">
        <title>Basigin, a new member of the immunoglobulin superfamily: genes in different mammalian species, glycosylation changes in the molecule from adult organs and possible variation in the N-terminal sequences.</title>
        <authorList>
            <person name="Kanekura T."/>
            <person name="Miyauchi T."/>
            <person name="Tahior M."/>
            <person name="Muramatsu T."/>
        </authorList>
    </citation>
    <scope>NUCLEOTIDE SEQUENCE (ISOFORM 2)</scope>
</reference>
<reference key="6">
    <citation type="journal article" date="2003" name="Invest. Ophthalmol. Vis. Sci.">
        <title>Retina-specific expression of 5A11/Basigin-2, a member of the immunoglobulin gene superfamily.</title>
        <authorList>
            <person name="Ochrietor J.D."/>
            <person name="Moroz T.P."/>
            <person name="van Ekeris L."/>
            <person name="Clamp M.F."/>
            <person name="Jefferson S.C."/>
            <person name="deCarvalho A.C."/>
            <person name="Fadool J.M."/>
            <person name="Wistow G."/>
            <person name="Muramatsu T."/>
            <person name="Linser P.J."/>
        </authorList>
    </citation>
    <scope>NUCLEOTIDE SEQUENCE (ISOFORM 1)</scope>
    <scope>TISSUE SPECIFICITY (ISOFORMS 1 AND 2)</scope>
    <source>
        <tissue>Retina</tissue>
    </source>
</reference>
<reference key="7">
    <citation type="journal article" date="2005" name="Science">
        <title>The transcriptional landscape of the mammalian genome.</title>
        <authorList>
            <person name="Carninci P."/>
            <person name="Kasukawa T."/>
            <person name="Katayama S."/>
            <person name="Gough J."/>
            <person name="Frith M.C."/>
            <person name="Maeda N."/>
            <person name="Oyama R."/>
            <person name="Ravasi T."/>
            <person name="Lenhard B."/>
            <person name="Wells C."/>
            <person name="Kodzius R."/>
            <person name="Shimokawa K."/>
            <person name="Bajic V.B."/>
            <person name="Brenner S.E."/>
            <person name="Batalov S."/>
            <person name="Forrest A.R."/>
            <person name="Zavolan M."/>
            <person name="Davis M.J."/>
            <person name="Wilming L.G."/>
            <person name="Aidinis V."/>
            <person name="Allen J.E."/>
            <person name="Ambesi-Impiombato A."/>
            <person name="Apweiler R."/>
            <person name="Aturaliya R.N."/>
            <person name="Bailey T.L."/>
            <person name="Bansal M."/>
            <person name="Baxter L."/>
            <person name="Beisel K.W."/>
            <person name="Bersano T."/>
            <person name="Bono H."/>
            <person name="Chalk A.M."/>
            <person name="Chiu K.P."/>
            <person name="Choudhary V."/>
            <person name="Christoffels A."/>
            <person name="Clutterbuck D.R."/>
            <person name="Crowe M.L."/>
            <person name="Dalla E."/>
            <person name="Dalrymple B.P."/>
            <person name="de Bono B."/>
            <person name="Della Gatta G."/>
            <person name="di Bernardo D."/>
            <person name="Down T."/>
            <person name="Engstrom P."/>
            <person name="Fagiolini M."/>
            <person name="Faulkner G."/>
            <person name="Fletcher C.F."/>
            <person name="Fukushima T."/>
            <person name="Furuno M."/>
            <person name="Futaki S."/>
            <person name="Gariboldi M."/>
            <person name="Georgii-Hemming P."/>
            <person name="Gingeras T.R."/>
            <person name="Gojobori T."/>
            <person name="Green R.E."/>
            <person name="Gustincich S."/>
            <person name="Harbers M."/>
            <person name="Hayashi Y."/>
            <person name="Hensch T.K."/>
            <person name="Hirokawa N."/>
            <person name="Hill D."/>
            <person name="Huminiecki L."/>
            <person name="Iacono M."/>
            <person name="Ikeo K."/>
            <person name="Iwama A."/>
            <person name="Ishikawa T."/>
            <person name="Jakt M."/>
            <person name="Kanapin A."/>
            <person name="Katoh M."/>
            <person name="Kawasawa Y."/>
            <person name="Kelso J."/>
            <person name="Kitamura H."/>
            <person name="Kitano H."/>
            <person name="Kollias G."/>
            <person name="Krishnan S.P."/>
            <person name="Kruger A."/>
            <person name="Kummerfeld S.K."/>
            <person name="Kurochkin I.V."/>
            <person name="Lareau L.F."/>
            <person name="Lazarevic D."/>
            <person name="Lipovich L."/>
            <person name="Liu J."/>
            <person name="Liuni S."/>
            <person name="McWilliam S."/>
            <person name="Madan Babu M."/>
            <person name="Madera M."/>
            <person name="Marchionni L."/>
            <person name="Matsuda H."/>
            <person name="Matsuzawa S."/>
            <person name="Miki H."/>
            <person name="Mignone F."/>
            <person name="Miyake S."/>
            <person name="Morris K."/>
            <person name="Mottagui-Tabar S."/>
            <person name="Mulder N."/>
            <person name="Nakano N."/>
            <person name="Nakauchi H."/>
            <person name="Ng P."/>
            <person name="Nilsson R."/>
            <person name="Nishiguchi S."/>
            <person name="Nishikawa S."/>
            <person name="Nori F."/>
            <person name="Ohara O."/>
            <person name="Okazaki Y."/>
            <person name="Orlando V."/>
            <person name="Pang K.C."/>
            <person name="Pavan W.J."/>
            <person name="Pavesi G."/>
            <person name="Pesole G."/>
            <person name="Petrovsky N."/>
            <person name="Piazza S."/>
            <person name="Reed J."/>
            <person name="Reid J.F."/>
            <person name="Ring B.Z."/>
            <person name="Ringwald M."/>
            <person name="Rost B."/>
            <person name="Ruan Y."/>
            <person name="Salzberg S.L."/>
            <person name="Sandelin A."/>
            <person name="Schneider C."/>
            <person name="Schoenbach C."/>
            <person name="Sekiguchi K."/>
            <person name="Semple C.A."/>
            <person name="Seno S."/>
            <person name="Sessa L."/>
            <person name="Sheng Y."/>
            <person name="Shibata Y."/>
            <person name="Shimada H."/>
            <person name="Shimada K."/>
            <person name="Silva D."/>
            <person name="Sinclair B."/>
            <person name="Sperling S."/>
            <person name="Stupka E."/>
            <person name="Sugiura K."/>
            <person name="Sultana R."/>
            <person name="Takenaka Y."/>
            <person name="Taki K."/>
            <person name="Tammoja K."/>
            <person name="Tan S.L."/>
            <person name="Tang S."/>
            <person name="Taylor M.S."/>
            <person name="Tegner J."/>
            <person name="Teichmann S.A."/>
            <person name="Ueda H.R."/>
            <person name="van Nimwegen E."/>
            <person name="Verardo R."/>
            <person name="Wei C.L."/>
            <person name="Yagi K."/>
            <person name="Yamanishi H."/>
            <person name="Zabarovsky E."/>
            <person name="Zhu S."/>
            <person name="Zimmer A."/>
            <person name="Hide W."/>
            <person name="Bult C."/>
            <person name="Grimmond S.M."/>
            <person name="Teasdale R.D."/>
            <person name="Liu E.T."/>
            <person name="Brusic V."/>
            <person name="Quackenbush J."/>
            <person name="Wahlestedt C."/>
            <person name="Mattick J.S."/>
            <person name="Hume D.A."/>
            <person name="Kai C."/>
            <person name="Sasaki D."/>
            <person name="Tomaru Y."/>
            <person name="Fukuda S."/>
            <person name="Kanamori-Katayama M."/>
            <person name="Suzuki M."/>
            <person name="Aoki J."/>
            <person name="Arakawa T."/>
            <person name="Iida J."/>
            <person name="Imamura K."/>
            <person name="Itoh M."/>
            <person name="Kato T."/>
            <person name="Kawaji H."/>
            <person name="Kawagashira N."/>
            <person name="Kawashima T."/>
            <person name="Kojima M."/>
            <person name="Kondo S."/>
            <person name="Konno H."/>
            <person name="Nakano K."/>
            <person name="Ninomiya N."/>
            <person name="Nishio T."/>
            <person name="Okada M."/>
            <person name="Plessy C."/>
            <person name="Shibata K."/>
            <person name="Shiraki T."/>
            <person name="Suzuki S."/>
            <person name="Tagami M."/>
            <person name="Waki K."/>
            <person name="Watahiki A."/>
            <person name="Okamura-Oho Y."/>
            <person name="Suzuki H."/>
            <person name="Kawai J."/>
            <person name="Hayashizaki Y."/>
        </authorList>
    </citation>
    <scope>NUCLEOTIDE SEQUENCE [LARGE SCALE MRNA] (ISOFORM 2)</scope>
    <source>
        <strain>C57BL/6J</strain>
        <tissue>Kidney</tissue>
    </source>
</reference>
<reference key="8">
    <citation type="journal article" date="2004" name="Genome Res.">
        <title>The status, quality, and expansion of the NIH full-length cDNA project: the Mammalian Gene Collection (MGC).</title>
        <authorList>
            <consortium name="The MGC Project Team"/>
        </authorList>
    </citation>
    <scope>NUCLEOTIDE SEQUENCE [LARGE SCALE MRNA] (ISOFORM 2)</scope>
    <source>
        <strain>Czech II</strain>
        <tissue>Mammary gland</tissue>
    </source>
</reference>
<reference key="9">
    <citation type="journal article" date="2003" name="J. Neurochem.">
        <title>The immunoglobulin-superfamily molecule basigin is a binding protein for oligomannosidic carbohydrates: an anti-idiotypic approach.</title>
        <authorList>
            <person name="Heller M."/>
            <person name="von der Ohe M."/>
            <person name="Kleene R."/>
            <person name="Mohajeri M.H."/>
            <person name="Schachner M."/>
        </authorList>
    </citation>
    <scope>PROTEIN SEQUENCE OF N-TERMINUS</scope>
    <scope>PROTEIN SEQUENCE OF 278-286</scope>
    <scope>INTERACTION WITH ATP1B2; MAG AND L1CAM (ISOFORM 2)</scope>
    <scope>GLYCOSYLATION (ISOFORM 2)</scope>
    <source>
        <tissue>Brain</tissue>
    </source>
</reference>
<reference key="10">
    <citation type="submission" date="2007-04" db="UniProtKB">
        <authorList>
            <person name="Lubec G."/>
            <person name="Kang S.U."/>
        </authorList>
    </citation>
    <scope>PROTEIN SEQUENCE OF 278-286</scope>
    <scope>IDENTIFICATION BY MASS SPECTROMETRY</scope>
    <source>
        <strain>C57BL/6J</strain>
        <tissue>Brain</tissue>
    </source>
</reference>
<reference key="11">
    <citation type="journal article" date="2000" name="Invest. Ophthalmol. Vis. Sci.">
        <title>Retinal dysfunction in basigin deficiency.</title>
        <authorList>
            <person name="Hori K."/>
            <person name="Katayama N."/>
            <person name="Kachi S."/>
            <person name="Kondo M."/>
            <person name="Kadomatsu K."/>
            <person name="Usukura J."/>
            <person name="Muramatsu T."/>
            <person name="Mori S."/>
            <person name="Miyake Y."/>
        </authorList>
    </citation>
    <scope>FUNCTION (ISOFORM 1)</scope>
    <scope>DISRUPTION PHENOTYPE</scope>
</reference>
<reference key="12">
    <citation type="journal article" date="2001" name="Exp. Eye Res.">
        <title>Retinal degeneration following failed photoreceptor maturation in 5A11/basigin null mice.</title>
        <authorList>
            <person name="Ochrietor J.D."/>
            <person name="Moroz T.M."/>
            <person name="Kadomatsu K."/>
            <person name="Muramatsu T."/>
            <person name="Linser P.J."/>
        </authorList>
    </citation>
    <scope>FUNCTION (ISOFORM 1)</scope>
    <scope>SUBCELLULAR LOCATION (ISOFORM 1)</scope>
    <scope>DISRUPTION PHENOTYPE</scope>
    <scope>TISSUE SPECIFICITY (ISOFORM 1)</scope>
</reference>
<reference key="13">
    <citation type="journal article" date="2002" name="Vision Res.">
        <title>Inactivation of the Basigin gene impairs normal retinal development and maturation.</title>
        <authorList>
            <person name="Ochrietor J.D."/>
            <person name="Moroz T.P."/>
            <person name="Clamp M.F."/>
            <person name="Timmers A.M."/>
            <person name="Muramatsu T."/>
            <person name="Linser P.J."/>
        </authorList>
    </citation>
    <scope>FUNCTION (ISOFORM 1)</scope>
    <scope>SUBCELLULAR LOCATION (ISOFORM 1)</scope>
    <scope>DISRUPTION PHENOTYPE</scope>
    <scope>TISSUE SPECIFICITY (ISOFORM 1)</scope>
</reference>
<reference key="14">
    <citation type="journal article" date="2003" name="Invest. Ophthalmol. Vis. Sci.">
        <title>Loss of MCT1, MCT3, and MCT4 expression in the retinal pigment epithelium and neural retina of the 5A11/basigin-null mouse.</title>
        <authorList>
            <person name="Philp N.J."/>
            <person name="Ochrietor J.D."/>
            <person name="Rudoy C."/>
            <person name="Muramatsu T."/>
            <person name="Linser P.J."/>
        </authorList>
    </citation>
    <scope>FUNCTION (ISOFORM 2)</scope>
    <scope>SUBCELLULAR LOCATION (ISOFORM 2)</scope>
</reference>
<reference key="15">
    <citation type="journal article" date="2002" name="Mol. Reprod. Dev.">
        <title>Basigin expression and hormonal regulation in mouse uterus during the peri-implantation period.</title>
        <authorList>
            <person name="Xiao L.J."/>
            <person name="Chang H."/>
            <person name="Ding N.Z."/>
            <person name="Ni H."/>
            <person name="Kadomatsu K."/>
            <person name="Yang Z.M."/>
        </authorList>
    </citation>
    <scope>DEVELOPMENTAL STAGE</scope>
    <scope>INDUCTION</scope>
</reference>
<reference key="16">
    <citation type="journal article" date="2002" name="Reproduction">
        <title>Behaviour of a sperm surface transmembrane glycoprotein basigin during epididymal maturation and its role in fertilization in mice.</title>
        <authorList>
            <person name="Saxena D.K."/>
            <person name="Oh-Oka T."/>
            <person name="Kadomatsu K."/>
            <person name="Muramatsu T."/>
            <person name="Toshimori K."/>
        </authorList>
    </citation>
    <scope>FUNCTION (ISOFORM 2)</scope>
    <scope>SUBCELLULAR LOCATION (ISOFORM 2)</scope>
    <scope>TISSUE SPECIFICITY (IOSFORM 2)</scope>
    <scope>DEGLYCOSYLATION</scope>
</reference>
<reference key="17">
    <citation type="journal article" date="2004" name="Exp. Eye Res.">
        <title>Developmental analyses of 5A11/Basigin, 5A11/Basigin-2 and their putative binding partner MCT1 in the mouse eye.</title>
        <authorList>
            <person name="Clamp M.F."/>
            <person name="Ochrietor J.D."/>
            <person name="Moroz T.P."/>
            <person name="Linser P.J."/>
        </authorList>
    </citation>
    <scope>DEVELOPMENTAL STAGE</scope>
</reference>
<reference key="18">
    <citation type="journal article" date="2004" name="Mol. Reprod. Dev.">
        <title>Basigin expression and regulation in mouse ovary during the sexual maturation and development of corpus luteum.</title>
        <authorList>
            <person name="Chang H."/>
            <person name="Ni H."/>
            <person name="Ma X.-H."/>
            <person name="Xu L.-B."/>
            <person name="Kadomatsu K."/>
            <person name="Muramatsu T."/>
            <person name="Yang Z.-M."/>
        </authorList>
    </citation>
    <scope>DEVELOPMENTAL STAGE</scope>
    <scope>INDUCTION</scope>
</reference>
<reference key="19">
    <citation type="journal article" date="2009" name="Immunity">
        <title>The phagosomal proteome in interferon-gamma-activated macrophages.</title>
        <authorList>
            <person name="Trost M."/>
            <person name="English L."/>
            <person name="Lemieux S."/>
            <person name="Courcelles M."/>
            <person name="Desjardins M."/>
            <person name="Thibault P."/>
        </authorList>
    </citation>
    <scope>PHOSPHORYLATION [LARGE SCALE ANALYSIS] AT THR-358 AND SER-372</scope>
    <scope>IDENTIFICATION BY MASS SPECTROMETRY [LARGE SCALE ANALYSIS]</scope>
</reference>
<reference key="20">
    <citation type="journal article" date="2009" name="Mol. Cell. Proteomics">
        <title>The mouse C2C12 myoblast cell surface N-linked glycoproteome: identification, glycosite occupancy, and membrane orientation.</title>
        <authorList>
            <person name="Gundry R.L."/>
            <person name="Raginski K."/>
            <person name="Tarasova Y."/>
            <person name="Tchernyshyov I."/>
            <person name="Bausch-Fluck D."/>
            <person name="Elliott S.T."/>
            <person name="Boheler K.R."/>
            <person name="Van Eyk J.E."/>
            <person name="Wollscheid B."/>
        </authorList>
    </citation>
    <scope>GLYCOSYLATION [LARGE SCALE ANALYSIS] AT ASN-160 AND ASN-270</scope>
    <source>
        <tissue>Myoblast</tissue>
    </source>
</reference>
<reference key="21">
    <citation type="journal article" date="2009" name="Nat. Biotechnol.">
        <title>Mass-spectrometric identification and relative quantification of N-linked cell surface glycoproteins.</title>
        <authorList>
            <person name="Wollscheid B."/>
            <person name="Bausch-Fluck D."/>
            <person name="Henderson C."/>
            <person name="O'Brien R."/>
            <person name="Bibel M."/>
            <person name="Schiess R."/>
            <person name="Aebersold R."/>
            <person name="Watts J.D."/>
        </authorList>
    </citation>
    <scope>GLYCOSYLATION [LARGE SCALE ANALYSIS] AT ASN-160; ASN-270 AND ASN-306</scope>
</reference>
<reference key="22">
    <citation type="journal article" date="2010" name="Cell">
        <title>A tissue-specific atlas of mouse protein phosphorylation and expression.</title>
        <authorList>
            <person name="Huttlin E.L."/>
            <person name="Jedrychowski M.P."/>
            <person name="Elias J.E."/>
            <person name="Goswami T."/>
            <person name="Rad R."/>
            <person name="Beausoleil S.A."/>
            <person name="Villen J."/>
            <person name="Haas W."/>
            <person name="Sowa M.E."/>
            <person name="Gygi S.P."/>
        </authorList>
    </citation>
    <scope>IDENTIFICATION BY MASS SPECTROMETRY [LARGE SCALE ANALYSIS]</scope>
    <source>
        <tissue>Brain</tissue>
        <tissue>Brown adipose tissue</tissue>
        <tissue>Heart</tissue>
        <tissue>Kidney</tissue>
        <tissue>Liver</tissue>
        <tissue>Lung</tissue>
        <tissue>Pancreas</tissue>
        <tissue>Spleen</tissue>
        <tissue>Testis</tissue>
    </source>
</reference>
<reference key="23">
    <citation type="journal article" date="2012" name="J. Cell. Physiol.">
        <title>Basigin interacts with both MCT1 and MCT2 in murine spermatozoa.</title>
        <authorList>
            <person name="Mannowetz N."/>
            <person name="Wandernoth P."/>
            <person name="Wennemuth G."/>
        </authorList>
    </citation>
    <scope>INTERACTION WITH SLC16A1 AND SLC16A7 (ISOFORM 2)</scope>
    <scope>TISSUE SPECIFICITY</scope>
    <scope>FUNCTION (ISOFORM 2)</scope>
</reference>
<reference key="24">
    <citation type="journal article" date="2013" name="Dev. Biol.">
        <title>Basigin null mutant male mice are sterile and exhibit impaired interactions between germ cells and Sertoli cells.</title>
        <authorList>
            <person name="Bi J."/>
            <person name="Li Y."/>
            <person name="Sun F."/>
            <person name="Saalbach A."/>
            <person name="Klein C."/>
            <person name="Miller D.J."/>
            <person name="Hess R."/>
            <person name="Nowak R.A."/>
        </authorList>
    </citation>
    <scope>FUNCTION (ISOFORM 2)</scope>
    <scope>DISRUPTION PHENOTYPE</scope>
    <scope>TISSUE SPECIFICITY (ISOFORM 2)</scope>
    <scope>GLYCOSYLATION (ISOFORM 2)</scope>
</reference>
<reference key="25">
    <citation type="journal article" date="2015" name="Cell">
        <title>Rod-derived cone viability factor promotes cone survival by stimulating aerobic glycolysis.</title>
        <authorList>
            <person name="Ait-Ali N."/>
            <person name="Fridlich R."/>
            <person name="Millet-Puel G."/>
            <person name="Clerin E."/>
            <person name="Delalande F."/>
            <person name="Jaillard C."/>
            <person name="Blond F."/>
            <person name="Perrocheau L."/>
            <person name="Reichman S."/>
            <person name="Byrne L.C."/>
            <person name="Olivier-Bandini A."/>
            <person name="Bellalou J."/>
            <person name="Moyse E."/>
            <person name="Bouillaud F."/>
            <person name="Nicol X."/>
            <person name="Dalkara D."/>
            <person name="van Dorsselaer A."/>
            <person name="Sahel J.A."/>
            <person name="Leveillard T."/>
        </authorList>
    </citation>
    <scope>FUNCTION (ISOFORM 1)</scope>
    <scope>INTERACTION WITH NXNL1 (ISOFORM 1)</scope>
    <scope>SUBCELLULAR LOCATION (ISOFORM 1)</scope>
    <scope>TISSUE SPECIFICITY (ISOFORMS 1 AND 2)</scope>
    <scope>GLYCOSYLATION (ISOFORM 1)</scope>
</reference>
<reference key="26">
    <citation type="journal article" date="2016" name="Proc. Natl. Acad. Sci. U.S.A.">
        <title>Xkr8 phospholipid scrambling complex in apoptotic phosphatidylserine exposure.</title>
        <authorList>
            <person name="Suzuki J."/>
            <person name="Imanishi E."/>
            <person name="Nagata S."/>
        </authorList>
    </citation>
    <scope>INTERACTION WITH XKR8</scope>
</reference>
<sequence length="389" mass="42445">MAAALLLALAFTLLSGQGACAAAGFLKAPLSQERWAGGSVVLHCEAVGSPIPEIQWWFEGNAPNDSCSQLWDGARLDRVHIHAAYRQHAASSLSVDGLTAEDTGTYECRASSDPDRNHLTRPPRVKWVRAQASVVVLEPGTIQTSVQEVNSKTQLTCSLNSSGVDIVGHRWMRGGKVLQEDTLPDLHTKYIVDADDRSGEYSCIFLPEPVGRSEINVEGPPRIKVGKKSEHSSEGELAKLVCKSDASYPPITDWFWFKTSDTGEEEAITNSTEANGKYVVVSTPEKSQLTISNLDVNVDPGTYVCNATNAQGTTRETISLRVRSRMAALWPFLGIVAEVLVLVTIIFIYEKRRKPDQTLDEDDPGAAPLKGSGTHMNDKDKNVRQRNAT</sequence>
<name>BASI_MOUSE</name>
<keyword id="KW-0002">3D-structure</keyword>
<keyword id="KW-0025">Alternative splicing</keyword>
<keyword id="KW-0037">Angiogenesis</keyword>
<keyword id="KW-1003">Cell membrane</keyword>
<keyword id="KW-0966">Cell projection</keyword>
<keyword id="KW-0221">Differentiation</keyword>
<keyword id="KW-0903">Direct protein sequencing</keyword>
<keyword id="KW-1015">Disulfide bond</keyword>
<keyword id="KW-0256">Endoplasmic reticulum</keyword>
<keyword id="KW-0325">Glycoprotein</keyword>
<keyword id="KW-0393">Immunoglobulin domain</keyword>
<keyword id="KW-0430">Lectin</keyword>
<keyword id="KW-0465">Mannose-binding</keyword>
<keyword id="KW-0472">Membrane</keyword>
<keyword id="KW-0597">Phosphoprotein</keyword>
<keyword id="KW-0675">Receptor</keyword>
<keyword id="KW-1185">Reference proteome</keyword>
<keyword id="KW-0732">Signal</keyword>
<keyword id="KW-0744">Spermatogenesis</keyword>
<keyword id="KW-0812">Transmembrane</keyword>
<keyword id="KW-1133">Transmembrane helix</keyword>
<feature type="signal peptide">
    <location>
        <begin position="1"/>
        <end position="21"/>
    </location>
</feature>
<feature type="chain" id="PRO_0000014519" description="Basigin">
    <location>
        <begin position="22"/>
        <end position="389"/>
    </location>
</feature>
<feature type="topological domain" description="Extracellular" evidence="2">
    <location>
        <begin position="22"/>
        <end position="325"/>
    </location>
</feature>
<feature type="transmembrane region" description="Helical" evidence="4">
    <location>
        <begin position="326"/>
        <end position="349"/>
    </location>
</feature>
<feature type="topological domain" description="Cytoplasmic" evidence="2">
    <location>
        <begin position="350"/>
        <end position="389"/>
    </location>
</feature>
<feature type="domain" description="Ig-like" evidence="5">
    <location>
        <begin position="37"/>
        <end position="120"/>
    </location>
</feature>
<feature type="domain" description="Ig-like C2-type" evidence="5">
    <location>
        <begin position="138"/>
        <end position="219"/>
    </location>
</feature>
<feature type="domain" description="Ig-like V-type" evidence="5">
    <location>
        <begin position="221"/>
        <end position="319"/>
    </location>
</feature>
<feature type="region of interest" description="Disordered" evidence="6">
    <location>
        <begin position="356"/>
        <end position="389"/>
    </location>
</feature>
<feature type="modified residue" description="Phosphothreonine" evidence="32">
    <location>
        <position position="358"/>
    </location>
</feature>
<feature type="modified residue" description="Phosphoserine" evidence="32">
    <location>
        <position position="372"/>
    </location>
</feature>
<feature type="glycosylation site" description="N-linked (GlcNAc...) asparagine" evidence="17 18">
    <location>
        <position position="160"/>
    </location>
</feature>
<feature type="glycosylation site" description="N-linked (GlcNAc...) asparagine" evidence="17 18">
    <location>
        <position position="270"/>
    </location>
</feature>
<feature type="glycosylation site" description="N-linked (GlcNAc...) asparagine" evidence="17">
    <location>
        <position position="306"/>
    </location>
</feature>
<feature type="disulfide bond" evidence="5">
    <location>
        <begin position="44"/>
        <end position="108"/>
    </location>
</feature>
<feature type="disulfide bond" evidence="5">
    <location>
        <begin position="157"/>
        <end position="203"/>
    </location>
</feature>
<feature type="disulfide bond" evidence="5">
    <location>
        <begin position="242"/>
        <end position="305"/>
    </location>
</feature>
<feature type="splice variant" id="VSP_011502" description="In isoform 2." evidence="27 28 29 31">
    <location>
        <begin position="24"/>
        <end position="139"/>
    </location>
</feature>
<feature type="strand" evidence="33">
    <location>
        <begin position="234"/>
        <end position="236"/>
    </location>
</feature>
<feature type="strand" evidence="33">
    <location>
        <begin position="238"/>
        <end position="241"/>
    </location>
</feature>
<feature type="strand" evidence="33">
    <location>
        <begin position="253"/>
        <end position="259"/>
    </location>
</feature>
<feature type="strand" evidence="33">
    <location>
        <begin position="261"/>
        <end position="263"/>
    </location>
</feature>
<feature type="strand" evidence="33">
    <location>
        <begin position="265"/>
        <end position="267"/>
    </location>
</feature>
<feature type="strand" evidence="33">
    <location>
        <begin position="273"/>
        <end position="275"/>
    </location>
</feature>
<feature type="strand" evidence="33">
    <location>
        <begin position="277"/>
        <end position="283"/>
    </location>
</feature>
<feature type="strand" evidence="33">
    <location>
        <begin position="286"/>
        <end position="291"/>
    </location>
</feature>
<feature type="strand" evidence="33">
    <location>
        <begin position="296"/>
        <end position="299"/>
    </location>
</feature>
<feature type="strand" evidence="33">
    <location>
        <begin position="301"/>
        <end position="308"/>
    </location>
</feature>
<feature type="strand" evidence="33">
    <location>
        <begin position="310"/>
        <end position="320"/>
    </location>
</feature>
<evidence type="ECO:0000250" key="1">
    <source>
        <dbReference type="UniProtKB" id="P17790"/>
    </source>
</evidence>
<evidence type="ECO:0000250" key="2">
    <source>
        <dbReference type="UniProtKB" id="P26453"/>
    </source>
</evidence>
<evidence type="ECO:0000250" key="3">
    <source>
        <dbReference type="UniProtKB" id="P35613"/>
    </source>
</evidence>
<evidence type="ECO:0000255" key="4"/>
<evidence type="ECO:0000255" key="5">
    <source>
        <dbReference type="PROSITE-ProRule" id="PRU00114"/>
    </source>
</evidence>
<evidence type="ECO:0000256" key="6">
    <source>
        <dbReference type="SAM" id="MobiDB-lite"/>
    </source>
</evidence>
<evidence type="ECO:0000269" key="7">
    <source>
    </source>
</evidence>
<evidence type="ECO:0000269" key="8">
    <source>
    </source>
</evidence>
<evidence type="ECO:0000269" key="9">
    <source>
    </source>
</evidence>
<evidence type="ECO:0000269" key="10">
    <source>
    </source>
</evidence>
<evidence type="ECO:0000269" key="11">
    <source>
    </source>
</evidence>
<evidence type="ECO:0000269" key="12">
    <source>
    </source>
</evidence>
<evidence type="ECO:0000269" key="13">
    <source>
    </source>
</evidence>
<evidence type="ECO:0000269" key="14">
    <source>
    </source>
</evidence>
<evidence type="ECO:0000269" key="15">
    <source>
    </source>
</evidence>
<evidence type="ECO:0000269" key="16">
    <source>
    </source>
</evidence>
<evidence type="ECO:0000269" key="17">
    <source>
    </source>
</evidence>
<evidence type="ECO:0000269" key="18">
    <source>
    </source>
</evidence>
<evidence type="ECO:0000269" key="19">
    <source>
    </source>
</evidence>
<evidence type="ECO:0000269" key="20">
    <source>
    </source>
</evidence>
<evidence type="ECO:0000269" key="21">
    <source>
    </source>
</evidence>
<evidence type="ECO:0000269" key="22">
    <source>
    </source>
</evidence>
<evidence type="ECO:0000269" key="23">
    <source>
    </source>
</evidence>
<evidence type="ECO:0000303" key="24">
    <source>
    </source>
</evidence>
<evidence type="ECO:0000303" key="25">
    <source>
    </source>
</evidence>
<evidence type="ECO:0000303" key="26">
    <source>
    </source>
</evidence>
<evidence type="ECO:0000303" key="27">
    <source>
    </source>
</evidence>
<evidence type="ECO:0000303" key="28">
    <source>
    </source>
</evidence>
<evidence type="ECO:0000303" key="29">
    <source>
    </source>
</evidence>
<evidence type="ECO:0000303" key="30">
    <source>
    </source>
</evidence>
<evidence type="ECO:0000303" key="31">
    <source>
    </source>
</evidence>
<evidence type="ECO:0007744" key="32">
    <source>
    </source>
</evidence>
<evidence type="ECO:0007829" key="33">
    <source>
        <dbReference type="PDB" id="7Y1B"/>
    </source>
</evidence>
<dbReference type="EMBL" id="D00611">
    <property type="protein sequence ID" value="BAA00486.1"/>
    <property type="molecule type" value="mRNA"/>
</dbReference>
<dbReference type="EMBL" id="D82019">
    <property type="protein sequence ID" value="BAA11508.1"/>
    <property type="molecule type" value="Genomic_DNA"/>
</dbReference>
<dbReference type="EMBL" id="S63813">
    <property type="protein sequence ID" value="AAB27567.2"/>
    <property type="molecule type" value="mRNA"/>
</dbReference>
<dbReference type="EMBL" id="Y16256">
    <property type="protein sequence ID" value="CAA76140.1"/>
    <property type="molecule type" value="mRNA"/>
</dbReference>
<dbReference type="EMBL" id="AY089967">
    <property type="protein sequence ID" value="AAM09957.1"/>
    <property type="molecule type" value="mRNA"/>
</dbReference>
<dbReference type="EMBL" id="AK002332">
    <property type="protein sequence ID" value="BAB22018.1"/>
    <property type="molecule type" value="mRNA"/>
</dbReference>
<dbReference type="EMBL" id="BC010270">
    <property type="protein sequence ID" value="AAH10270.1"/>
    <property type="molecule type" value="mRNA"/>
</dbReference>
<dbReference type="CCDS" id="CCDS23985.1">
    <molecule id="P18572-1"/>
</dbReference>
<dbReference type="CCDS" id="CCDS35967.1">
    <molecule id="P18572-2"/>
</dbReference>
<dbReference type="PIR" id="JX0107">
    <property type="entry name" value="JX0107"/>
</dbReference>
<dbReference type="PIR" id="S43512">
    <property type="entry name" value="S43512"/>
</dbReference>
<dbReference type="RefSeq" id="NP_001070652.1">
    <molecule id="P18572-2"/>
    <property type="nucleotide sequence ID" value="NM_001077184.1"/>
</dbReference>
<dbReference type="RefSeq" id="NP_033898.1">
    <molecule id="P18572-1"/>
    <property type="nucleotide sequence ID" value="NM_009768.2"/>
</dbReference>
<dbReference type="PDB" id="7Y1B">
    <property type="method" value="EM"/>
    <property type="resolution" value="3.23 A"/>
    <property type="chains" value="A=140-389"/>
</dbReference>
<dbReference type="PDB" id="7Y1Q">
    <property type="method" value="EM"/>
    <property type="resolution" value="5.03 A"/>
    <property type="chains" value="B=140-389"/>
</dbReference>
<dbReference type="PDBsum" id="7Y1B"/>
<dbReference type="PDBsum" id="7Y1Q"/>
<dbReference type="EMDB" id="EMD-33559"/>
<dbReference type="EMDB" id="EMD-33570"/>
<dbReference type="SMR" id="P18572"/>
<dbReference type="BioGRID" id="198392">
    <property type="interactions" value="16"/>
</dbReference>
<dbReference type="FunCoup" id="P18572">
    <property type="interactions" value="940"/>
</dbReference>
<dbReference type="IntAct" id="P18572">
    <property type="interactions" value="2"/>
</dbReference>
<dbReference type="MINT" id="P18572"/>
<dbReference type="STRING" id="10090.ENSMUSP00000070751"/>
<dbReference type="GlyConnect" id="2147">
    <property type="glycosylation" value="7 N-Linked glycans (2 sites)"/>
</dbReference>
<dbReference type="GlyCosmos" id="P18572">
    <property type="glycosylation" value="3 sites, 7 glycans"/>
</dbReference>
<dbReference type="GlyGen" id="P18572">
    <property type="glycosylation" value="4 sites, 10 N-linked glycans (3 sites), 1 O-linked glycan (1 site)"/>
</dbReference>
<dbReference type="iPTMnet" id="P18572"/>
<dbReference type="PhosphoSitePlus" id="P18572"/>
<dbReference type="SwissPalm" id="P18572"/>
<dbReference type="jPOST" id="P18572"/>
<dbReference type="PaxDb" id="10090-ENSMUSP00000070751"/>
<dbReference type="PeptideAtlas" id="P18572"/>
<dbReference type="ProteomicsDB" id="273438">
    <molecule id="P18572-1"/>
</dbReference>
<dbReference type="ProteomicsDB" id="273439">
    <molecule id="P18572-2"/>
</dbReference>
<dbReference type="Pumba" id="P18572"/>
<dbReference type="ABCD" id="P18572">
    <property type="antibodies" value="27 sequenced antibodies"/>
</dbReference>
<dbReference type="Antibodypedia" id="3719">
    <property type="antibodies" value="2292 antibodies from 47 providers"/>
</dbReference>
<dbReference type="DNASU" id="12215"/>
<dbReference type="Ensembl" id="ENSMUST00000067036.12">
    <molecule id="P18572-1"/>
    <property type="protein sequence ID" value="ENSMUSP00000070751.6"/>
    <property type="gene ID" value="ENSMUSG00000023175.16"/>
</dbReference>
<dbReference type="Ensembl" id="ENSMUST00000179781.8">
    <molecule id="P18572-2"/>
    <property type="protein sequence ID" value="ENSMUSP00000136487.2"/>
    <property type="gene ID" value="ENSMUSG00000023175.16"/>
</dbReference>
<dbReference type="GeneID" id="12215"/>
<dbReference type="KEGG" id="mmu:12215"/>
<dbReference type="UCSC" id="uc007fzl.1">
    <molecule id="P18572-1"/>
    <property type="organism name" value="mouse"/>
</dbReference>
<dbReference type="UCSC" id="uc007fzm.1">
    <molecule id="P18572-2"/>
    <property type="organism name" value="mouse"/>
</dbReference>
<dbReference type="AGR" id="MGI:88208"/>
<dbReference type="CTD" id="682"/>
<dbReference type="MGI" id="MGI:88208">
    <property type="gene designation" value="Bsg"/>
</dbReference>
<dbReference type="VEuPathDB" id="HostDB:ENSMUSG00000023175"/>
<dbReference type="eggNOG" id="ENOG502QPKN">
    <property type="taxonomic scope" value="Eukaryota"/>
</dbReference>
<dbReference type="GeneTree" id="ENSGT00940000159142"/>
<dbReference type="HOGENOM" id="CLU_058449_0_0_1"/>
<dbReference type="InParanoid" id="P18572"/>
<dbReference type="OMA" id="TITGHKW"/>
<dbReference type="OrthoDB" id="5970915at2759"/>
<dbReference type="PhylomeDB" id="P18572"/>
<dbReference type="TreeFam" id="TF326759"/>
<dbReference type="Reactome" id="R-MMU-1474228">
    <property type="pathway name" value="Degradation of the extracellular matrix"/>
</dbReference>
<dbReference type="Reactome" id="R-MMU-210991">
    <property type="pathway name" value="Basigin interactions"/>
</dbReference>
<dbReference type="Reactome" id="R-MMU-216083">
    <property type="pathway name" value="Integrin cell surface interactions"/>
</dbReference>
<dbReference type="Reactome" id="R-MMU-433692">
    <property type="pathway name" value="Proton-coupled monocarboxylate transport"/>
</dbReference>
<dbReference type="Reactome" id="R-MMU-9749641">
    <property type="pathway name" value="Aspirin ADME"/>
</dbReference>
<dbReference type="BioGRID-ORCS" id="12215">
    <property type="hits" value="11 hits in 75 CRISPR screens"/>
</dbReference>
<dbReference type="CD-CODE" id="CE726F99">
    <property type="entry name" value="Postsynaptic density"/>
</dbReference>
<dbReference type="ChiTaRS" id="Bsg">
    <property type="organism name" value="mouse"/>
</dbReference>
<dbReference type="PRO" id="PR:P18572"/>
<dbReference type="Proteomes" id="UP000000589">
    <property type="component" value="Chromosome 10"/>
</dbReference>
<dbReference type="RNAct" id="P18572">
    <property type="molecule type" value="protein"/>
</dbReference>
<dbReference type="Bgee" id="ENSMUSG00000023175">
    <property type="expression patterns" value="Expressed in placenta labyrinth and 338 other cell types or tissues"/>
</dbReference>
<dbReference type="ExpressionAtlas" id="P18572">
    <property type="expression patterns" value="baseline and differential"/>
</dbReference>
<dbReference type="GO" id="GO:0002080">
    <property type="term" value="C:acrosomal membrane"/>
    <property type="evidence" value="ECO:0000314"/>
    <property type="project" value="MGI"/>
</dbReference>
<dbReference type="GO" id="GO:0016323">
    <property type="term" value="C:basolateral plasma membrane"/>
    <property type="evidence" value="ECO:0007669"/>
    <property type="project" value="UniProtKB-SubCell"/>
</dbReference>
<dbReference type="GO" id="GO:0005789">
    <property type="term" value="C:endoplasmic reticulum membrane"/>
    <property type="evidence" value="ECO:0007669"/>
    <property type="project" value="UniProtKB-SubCell"/>
</dbReference>
<dbReference type="GO" id="GO:0001917">
    <property type="term" value="C:photoreceptor inner segment"/>
    <property type="evidence" value="ECO:0000314"/>
    <property type="project" value="UniProtKB"/>
</dbReference>
<dbReference type="GO" id="GO:0001750">
    <property type="term" value="C:photoreceptor outer segment"/>
    <property type="evidence" value="ECO:0000314"/>
    <property type="project" value="UniProtKB"/>
</dbReference>
<dbReference type="GO" id="GO:0005886">
    <property type="term" value="C:plasma membrane"/>
    <property type="evidence" value="ECO:0000314"/>
    <property type="project" value="UniProtKB"/>
</dbReference>
<dbReference type="GO" id="GO:0042383">
    <property type="term" value="C:sarcolemma"/>
    <property type="evidence" value="ECO:0007669"/>
    <property type="project" value="Ensembl"/>
</dbReference>
<dbReference type="GO" id="GO:0005537">
    <property type="term" value="F:D-mannose binding"/>
    <property type="evidence" value="ECO:0007669"/>
    <property type="project" value="UniProtKB-KW"/>
</dbReference>
<dbReference type="GO" id="GO:0038023">
    <property type="term" value="F:signaling receptor activity"/>
    <property type="evidence" value="ECO:0000250"/>
    <property type="project" value="UniProtKB"/>
</dbReference>
<dbReference type="GO" id="GO:0001525">
    <property type="term" value="P:angiogenesis"/>
    <property type="evidence" value="ECO:0007669"/>
    <property type="project" value="UniProtKB-KW"/>
</dbReference>
<dbReference type="GO" id="GO:0030154">
    <property type="term" value="P:cell differentiation"/>
    <property type="evidence" value="ECO:0007669"/>
    <property type="project" value="UniProtKB-KW"/>
</dbReference>
<dbReference type="GO" id="GO:0046697">
    <property type="term" value="P:decidualization"/>
    <property type="evidence" value="ECO:0007669"/>
    <property type="project" value="Ensembl"/>
</dbReference>
<dbReference type="GO" id="GO:0007566">
    <property type="term" value="P:embryo implantation"/>
    <property type="evidence" value="ECO:0007669"/>
    <property type="project" value="Ensembl"/>
</dbReference>
<dbReference type="GO" id="GO:0061154">
    <property type="term" value="P:endothelial tube morphogenesis"/>
    <property type="evidence" value="ECO:0000250"/>
    <property type="project" value="UniProtKB"/>
</dbReference>
<dbReference type="GO" id="GO:0003407">
    <property type="term" value="P:neural retina development"/>
    <property type="evidence" value="ECO:0000315"/>
    <property type="project" value="UniProtKB"/>
</dbReference>
<dbReference type="GO" id="GO:0030593">
    <property type="term" value="P:neutrophil chemotaxis"/>
    <property type="evidence" value="ECO:0007669"/>
    <property type="project" value="Ensembl"/>
</dbReference>
<dbReference type="GO" id="GO:0042475">
    <property type="term" value="P:odontogenesis of dentin-containing tooth"/>
    <property type="evidence" value="ECO:0007669"/>
    <property type="project" value="Ensembl"/>
</dbReference>
<dbReference type="GO" id="GO:0045494">
    <property type="term" value="P:photoreceptor cell maintenance"/>
    <property type="evidence" value="ECO:0000315"/>
    <property type="project" value="UniProtKB"/>
</dbReference>
<dbReference type="GO" id="GO:0010595">
    <property type="term" value="P:positive regulation of endothelial cell migration"/>
    <property type="evidence" value="ECO:0000250"/>
    <property type="project" value="UniProtKB"/>
</dbReference>
<dbReference type="GO" id="GO:0010575">
    <property type="term" value="P:positive regulation of vascular endothelial growth factor production"/>
    <property type="evidence" value="ECO:0000250"/>
    <property type="project" value="UniProtKB"/>
</dbReference>
<dbReference type="GO" id="GO:0072659">
    <property type="term" value="P:protein localization to plasma membrane"/>
    <property type="evidence" value="ECO:0000250"/>
    <property type="project" value="UniProtKB"/>
</dbReference>
<dbReference type="GO" id="GO:0051591">
    <property type="term" value="P:response to cAMP"/>
    <property type="evidence" value="ECO:0007669"/>
    <property type="project" value="Ensembl"/>
</dbReference>
<dbReference type="GO" id="GO:0046689">
    <property type="term" value="P:response to mercury ion"/>
    <property type="evidence" value="ECO:0007669"/>
    <property type="project" value="Ensembl"/>
</dbReference>
<dbReference type="GO" id="GO:0043434">
    <property type="term" value="P:response to peptide hormone"/>
    <property type="evidence" value="ECO:0007669"/>
    <property type="project" value="Ensembl"/>
</dbReference>
<dbReference type="GO" id="GO:0007283">
    <property type="term" value="P:spermatogenesis"/>
    <property type="evidence" value="ECO:0000315"/>
    <property type="project" value="UniProtKB"/>
</dbReference>
<dbReference type="FunFam" id="2.60.40.10:FF:001329">
    <property type="entry name" value="Basigin"/>
    <property type="match status" value="1"/>
</dbReference>
<dbReference type="FunFam" id="2.60.40.10:FF:000291">
    <property type="entry name" value="Neuroplastin b"/>
    <property type="match status" value="1"/>
</dbReference>
<dbReference type="FunFam" id="2.60.40.10:FF:000387">
    <property type="entry name" value="Neuroplastin b"/>
    <property type="match status" value="1"/>
</dbReference>
<dbReference type="Gene3D" id="2.60.40.10">
    <property type="entry name" value="Immunoglobulins"/>
    <property type="match status" value="3"/>
</dbReference>
<dbReference type="InterPro" id="IPR007110">
    <property type="entry name" value="Ig-like_dom"/>
</dbReference>
<dbReference type="InterPro" id="IPR036179">
    <property type="entry name" value="Ig-like_dom_sf"/>
</dbReference>
<dbReference type="InterPro" id="IPR013783">
    <property type="entry name" value="Ig-like_fold"/>
</dbReference>
<dbReference type="InterPro" id="IPR003599">
    <property type="entry name" value="Ig_sub"/>
</dbReference>
<dbReference type="InterPro" id="IPR003598">
    <property type="entry name" value="Ig_sub2"/>
</dbReference>
<dbReference type="PANTHER" id="PTHR10075:SF107">
    <property type="entry name" value="BASIGIN"/>
    <property type="match status" value="1"/>
</dbReference>
<dbReference type="PANTHER" id="PTHR10075">
    <property type="entry name" value="BASIGIN RELATED"/>
    <property type="match status" value="1"/>
</dbReference>
<dbReference type="Pfam" id="PF13927">
    <property type="entry name" value="Ig_3"/>
    <property type="match status" value="2"/>
</dbReference>
<dbReference type="SMART" id="SM00409">
    <property type="entry name" value="IG"/>
    <property type="match status" value="2"/>
</dbReference>
<dbReference type="SMART" id="SM00408">
    <property type="entry name" value="IGc2"/>
    <property type="match status" value="2"/>
</dbReference>
<dbReference type="SUPFAM" id="SSF48726">
    <property type="entry name" value="Immunoglobulin"/>
    <property type="match status" value="3"/>
</dbReference>
<dbReference type="PROSITE" id="PS50835">
    <property type="entry name" value="IG_LIKE"/>
    <property type="match status" value="3"/>
</dbReference>
<gene>
    <name type="primary">Bsg</name>
</gene>
<proteinExistence type="evidence at protein level"/>
<organism>
    <name type="scientific">Mus musculus</name>
    <name type="common">Mouse</name>
    <dbReference type="NCBI Taxonomy" id="10090"/>
    <lineage>
        <taxon>Eukaryota</taxon>
        <taxon>Metazoa</taxon>
        <taxon>Chordata</taxon>
        <taxon>Craniata</taxon>
        <taxon>Vertebrata</taxon>
        <taxon>Euteleostomi</taxon>
        <taxon>Mammalia</taxon>
        <taxon>Eutheria</taxon>
        <taxon>Euarchontoglires</taxon>
        <taxon>Glires</taxon>
        <taxon>Rodentia</taxon>
        <taxon>Myomorpha</taxon>
        <taxon>Muroidea</taxon>
        <taxon>Muridae</taxon>
        <taxon>Murinae</taxon>
        <taxon>Mus</taxon>
        <taxon>Mus</taxon>
    </lineage>
</organism>
<comment type="function">
    <molecule>Isoform 1</molecule>
    <text evidence="7 8 9 22">Essential for normal retinal maturation and development (PubMed:10967074, PubMed:11273674, PubMed:11853760). Acts as a retinal cell surface receptor for NXNL1 and plays an important role in NXNL1-mediated survival of retinal cone photoreceptors (PubMed:25957687). In association with glucose transporter SLC16A1/GLUT1 and NXNL1, promotes retinal cone survival by enhancing aerobic glycolysis and accelerating the entry of glucose into photoreceptors (PubMed:25957687).</text>
</comment>
<comment type="function">
    <molecule>Isoform 2</molecule>
    <text evidence="3 10 13 21">Signaling receptor for cyclophilins, essential for PPIA/CYPA and PPIB/CYPB-dependent signaling related to chemotaxis and adhesion of immune cells (By similarity). Plays an important role in targeting the monocarboxylate transporters SLC16A1, SLC16A3 and SLC16A8 to the plasma membrane (PubMed:12601063). Acts as a coreceptor for vascular endothelial growth factor receptor 2 (KDR/VEGFR2) in endothelial cells enhancing its VEGFA-mediated activation and downstream signaling (By similarity). Promotes angiogenesis through EPAS1/HIF2A-mediated up-regulation of VEGFA and KDR/VEGFR2 in endothelial cells (By similarity). Plays an important role in spermatogenesis; mediates interactions between germ cells and Sertoli cell and is essential for the development/differentiation of germ cells to round spermatids (PubMed:11882021, PubMed:23727514).</text>
</comment>
<comment type="subunit">
    <molecule>Isoform 1</molecule>
    <text evidence="1 22 23">Interacts with NXNL1 (PubMed:25957687). Interacts with SLC2A1 and SLC16A1/GLUT1 (By similarity). Interacts with XKR8; promoting its localization at the cell membrane (PubMed:27503893).</text>
</comment>
<comment type="subunit">
    <molecule>Isoform 2</molecule>
    <text evidence="2 3 12 19">Interacts with ATP1B2, MAG and L1CAM (PubMed:12558975). Interacts with SLC16A7 (PubMed:21792931). Interacts with VEGFA, KDR/VEGFR2, PPIA/CYPA, SLC1A3, SLC16A11 and SLC16A12 (By similarity). Interacts with PPIL2; regulates BSG transport to the cell membrane (By similarity). Interacts with SLC16A1; interaction mediates SLC16A1 targeting to the plasma membrane (By similarity). Interacts with SLC16A3; interaction mediates SLC16A3 targeting to the plasma membrane (By similarity).</text>
</comment>
<comment type="subunit">
    <text evidence="2">Interacts with SLC16A6; this interaction mediates targeting to the plasma membrane.</text>
</comment>
<comment type="interaction">
    <interactant intactId="EBI-772883">
        <id>P18572</id>
    </interactant>
    <interactant intactId="EBI-4285715">
        <id>Q8BIL5</id>
        <label>Hook1</label>
    </interactant>
    <organismsDiffer>false</organismsDiffer>
    <experiments>2</experiments>
</comment>
<comment type="subcellular location">
    <molecule>Isoform 1</molecule>
    <subcellularLocation>
        <location evidence="8 22">Cell membrane</location>
        <topology evidence="2">Single-pass type I membrane protein</topology>
    </subcellularLocation>
    <subcellularLocation>
        <location evidence="9 22">Photoreceptor inner segment</location>
    </subcellularLocation>
    <subcellularLocation>
        <location evidence="22">Cell projection</location>
        <location evidence="22">Cilium</location>
        <location evidence="22">Photoreceptor outer segment</location>
    </subcellularLocation>
</comment>
<comment type="subcellular location">
    <molecule>Isoform 2</molecule>
    <subcellularLocation>
        <location evidence="13">Cell membrane</location>
        <topology evidence="2">Single-pass type I membrane protein</topology>
    </subcellularLocation>
    <subcellularLocation>
        <location evidence="3">Endoplasmic reticulum membrane</location>
        <topology evidence="2">Single-pass type I membrane protein</topology>
    </subcellularLocation>
    <subcellularLocation>
        <location evidence="3">Basolateral cell membrane</location>
        <topology evidence="2">Single-pass type I membrane protein</topology>
    </subcellularLocation>
</comment>
<comment type="alternative products">
    <event type="alternative splicing"/>
    <isoform>
        <id>P18572-1</id>
        <name>1</name>
        <name evidence="24 25">5A11/Basigin</name>
        <name evidence="30">Basigin-1</name>
        <sequence type="displayed"/>
    </isoform>
    <isoform>
        <id>P18572-2</id>
        <name>2</name>
        <name evidence="26">5A11/Basigin-2</name>
        <name evidence="30">Basigin-2</name>
        <sequence type="described" ref="VSP_011502"/>
    </isoform>
</comment>
<comment type="tissue specificity">
    <molecule>Isoform 1</molecule>
    <text evidence="8 9 14 22">Retina-specific (PubMed:11273674, PubMed:11853760, PubMed:12939332, PubMed:25957687). Expressed in both rods and cones (at protein level) (PubMed:25957687).</text>
</comment>
<comment type="tissue specificity">
    <molecule>Isoform 2</molecule>
    <text evidence="10 13 14 19 20 21">Testis and caput, corpus and cauda epididymides (at protein level) (PubMed:11882021, PubMed:21792931, PubMed:23727514). Expressed in the brain, lung, liver, kidney, heart, spleen, uterus, retina and skeletal muscle (PubMed:12601063, PubMed:12939332, PubMed:2361961).</text>
</comment>
<comment type="developmental stage">
    <text evidence="11 15 16">In developing eye expressed at embryonic days 12 dpc, 15 dpc and 18 dpc, and at postnatal days P1, P7, P14, and P21. Expression progressed from a more generalized distribution throughout the undifferentiated neural retina to specific staining of retina-pigmented epithilia, the MCs, photoreceptor cells and the ciliary apparatus. Expression is highest at P21. Isoform 1 and isoform 2 are expressed at equivalent levels at P7, isoform 1 is more abundant at P14, P21 and P28. In uterus during the peri-implantation period strongly expressed in luminal and glandular epithelium on day 1 of pregnancy and gradually decreased to a basal level from day 2-4 of pregnancy. Expression in the sub-luminal stroma was first detected on day 3 of pregnancy and increased on day 4 of pregnancy. On day 5 of pregnancy, the expression of basigin protein and mRNA was only detected in the implanting embryos, and the luminal epithelium and sub-luminal stroma surrounding the embryos. In ovary during sexual maturation expressed in the granulosa cells of preantral follicles at days 20 and 25 after birth. Expressed during corpus luteum formation.</text>
</comment>
<comment type="induction">
    <text evidence="11 16">By estrogen in the uterine epithelium of ovariectomized animals. By eCG in ovary.</text>
</comment>
<comment type="PTM">
    <molecule>Isoform 1</molecule>
    <text evidence="17 18 22">N-glycosylated.</text>
</comment>
<comment type="PTM">
    <molecule>Isoform 2</molecule>
    <text evidence="10 12 21">N-glycosylated (PubMed:12558975, PubMed:23727514). During spermatogenesis, probably deglycosylated during epididymal transit (PubMed:11882021).</text>
</comment>
<comment type="disruption phenotype">
    <text evidence="7 8 9 21">Male mice are sterile, testis lack elongated spermatids and mature spermatozoa, spermatogenesis is arrested at the early round spermatid stages before any spermatid differentiation occurs, and a large increase in the number of germ cells undergoing apoptosis is seen in the testis (PubMed:23727514). Mice are visually impaired at the time of eye opening (2 weeks of age), despite normal retina architecture at that age (PubMed:10967074, PubMed:11273674, PubMed:11853760). At visual maturity (3 weeks of age), the photoreceptor outer segments appear less dense and shorter than those of control animals, and at 8 weeks, retinal degeneration is observed (PubMed:10967074, PubMed:11273674, PubMed:11853760).</text>
</comment>
<accession>P18572</accession>
<accession>Q6LDB0</accession>
<accession>Q7TSC0</accession>
<protein>
    <recommendedName>
        <fullName>Basigin</fullName>
    </recommendedName>
    <alternativeName>
        <fullName>Basic immunoglobulin superfamily</fullName>
    </alternativeName>
    <alternativeName>
        <fullName>HT7 antigen</fullName>
    </alternativeName>
    <alternativeName>
        <fullName>Membrane glycoprotein gp42</fullName>
    </alternativeName>
    <cdAntigenName>CD147</cdAntigenName>
</protein>